<protein>
    <recommendedName>
        <fullName evidence="1">Phosphoglucosamine mutase</fullName>
        <ecNumber evidence="1">5.4.2.10</ecNumber>
    </recommendedName>
</protein>
<name>GLMM_FRATT</name>
<sequence length="443" mass="48185">MAKYFGTDGIRGEVANSTITVEFTQKLGNAVGSLINQKNYPKFVIVGQDTRSSGGFLKFALVSGLNAAGIDVLDLGVVPTPVVAFMTVKHRAAAGFVITASHNKFTDNGIKLFSSNGFKLDDALEEEVEDMIDGDFIYQPQFKFGSYKILANAIDEYIESIYSRFAKFVNYKGKVVVDCAHGAASHNFEALLDKFGINYVSIASNPDGLNINVGCGATCVSNIKKAVKEQKADLGISLDGDADRIIIVDENGQEIDGDGILNILAQYSDICGGTNGIVGTQMTNMSYENHYRANKIPFIRSKVGDRYVLEDLVKYGYKIGGESSGHVINLNFGTTGDGLFTAIQLLAIFSQADKPVSEFKLQGELMQQTLINVPLTKKVAREDLQKVASDVNDVEKRLGNRGRVLLRPSGTEPVLRVMVEADDKSLATNEAEYLVEKVKQKLV</sequence>
<comment type="function">
    <text evidence="1">Catalyzes the conversion of glucosamine-6-phosphate to glucosamine-1-phosphate.</text>
</comment>
<comment type="catalytic activity">
    <reaction evidence="1">
        <text>alpha-D-glucosamine 1-phosphate = D-glucosamine 6-phosphate</text>
        <dbReference type="Rhea" id="RHEA:23424"/>
        <dbReference type="ChEBI" id="CHEBI:58516"/>
        <dbReference type="ChEBI" id="CHEBI:58725"/>
        <dbReference type="EC" id="5.4.2.10"/>
    </reaction>
</comment>
<comment type="cofactor">
    <cofactor evidence="1">
        <name>Mg(2+)</name>
        <dbReference type="ChEBI" id="CHEBI:18420"/>
    </cofactor>
    <text evidence="1">Binds 1 Mg(2+) ion per subunit.</text>
</comment>
<comment type="PTM">
    <text evidence="1">Activated by phosphorylation.</text>
</comment>
<comment type="similarity">
    <text evidence="1">Belongs to the phosphohexose mutase family.</text>
</comment>
<proteinExistence type="evidence at protein level"/>
<dbReference type="EC" id="5.4.2.10" evidence="1"/>
<dbReference type="EMBL" id="AJ749949">
    <property type="protein sequence ID" value="CAG44712.1"/>
    <property type="molecule type" value="Genomic_DNA"/>
</dbReference>
<dbReference type="RefSeq" id="WP_003019799.1">
    <property type="nucleotide sequence ID" value="NC_006570.2"/>
</dbReference>
<dbReference type="RefSeq" id="YP_169154.1">
    <property type="nucleotide sequence ID" value="NC_006570.2"/>
</dbReference>
<dbReference type="PDB" id="3I3W">
    <property type="method" value="X-ray"/>
    <property type="resolution" value="2.30 A"/>
    <property type="chains" value="A/B=1-443"/>
</dbReference>
<dbReference type="PDBsum" id="3I3W"/>
<dbReference type="SMR" id="Q5NII8"/>
<dbReference type="STRING" id="177416.FTT_0079"/>
<dbReference type="DNASU" id="3191618"/>
<dbReference type="EnsemblBacteria" id="CAG44712">
    <property type="protein sequence ID" value="CAG44712"/>
    <property type="gene ID" value="FTT_0079"/>
</dbReference>
<dbReference type="KEGG" id="ftu:FTT_0079"/>
<dbReference type="eggNOG" id="COG1109">
    <property type="taxonomic scope" value="Bacteria"/>
</dbReference>
<dbReference type="OrthoDB" id="9803322at2"/>
<dbReference type="EvolutionaryTrace" id="Q5NII8"/>
<dbReference type="Proteomes" id="UP000001174">
    <property type="component" value="Chromosome"/>
</dbReference>
<dbReference type="GO" id="GO:0005829">
    <property type="term" value="C:cytosol"/>
    <property type="evidence" value="ECO:0007669"/>
    <property type="project" value="TreeGrafter"/>
</dbReference>
<dbReference type="GO" id="GO:0000287">
    <property type="term" value="F:magnesium ion binding"/>
    <property type="evidence" value="ECO:0007669"/>
    <property type="project" value="UniProtKB-UniRule"/>
</dbReference>
<dbReference type="GO" id="GO:0008966">
    <property type="term" value="F:phosphoglucosamine mutase activity"/>
    <property type="evidence" value="ECO:0007669"/>
    <property type="project" value="UniProtKB-UniRule"/>
</dbReference>
<dbReference type="GO" id="GO:0004615">
    <property type="term" value="F:phosphomannomutase activity"/>
    <property type="evidence" value="ECO:0007669"/>
    <property type="project" value="TreeGrafter"/>
</dbReference>
<dbReference type="GO" id="GO:0005975">
    <property type="term" value="P:carbohydrate metabolic process"/>
    <property type="evidence" value="ECO:0007669"/>
    <property type="project" value="InterPro"/>
</dbReference>
<dbReference type="GO" id="GO:0009252">
    <property type="term" value="P:peptidoglycan biosynthetic process"/>
    <property type="evidence" value="ECO:0007669"/>
    <property type="project" value="TreeGrafter"/>
</dbReference>
<dbReference type="GO" id="GO:0006048">
    <property type="term" value="P:UDP-N-acetylglucosamine biosynthetic process"/>
    <property type="evidence" value="ECO:0007669"/>
    <property type="project" value="TreeGrafter"/>
</dbReference>
<dbReference type="CDD" id="cd05802">
    <property type="entry name" value="GlmM"/>
    <property type="match status" value="1"/>
</dbReference>
<dbReference type="FunFam" id="3.30.310.50:FF:000001">
    <property type="entry name" value="Phosphoglucosamine mutase"/>
    <property type="match status" value="1"/>
</dbReference>
<dbReference type="FunFam" id="3.40.120.10:FF:000001">
    <property type="entry name" value="Phosphoglucosamine mutase"/>
    <property type="match status" value="1"/>
</dbReference>
<dbReference type="FunFam" id="3.40.120.10:FF:000003">
    <property type="entry name" value="Phosphoglucosamine mutase"/>
    <property type="match status" value="1"/>
</dbReference>
<dbReference type="Gene3D" id="3.40.120.10">
    <property type="entry name" value="Alpha-D-Glucose-1,6-Bisphosphate, subunit A, domain 3"/>
    <property type="match status" value="3"/>
</dbReference>
<dbReference type="Gene3D" id="3.30.310.50">
    <property type="entry name" value="Alpha-D-phosphohexomutase, C-terminal domain"/>
    <property type="match status" value="1"/>
</dbReference>
<dbReference type="HAMAP" id="MF_01554_B">
    <property type="entry name" value="GlmM_B"/>
    <property type="match status" value="1"/>
</dbReference>
<dbReference type="InterPro" id="IPR005844">
    <property type="entry name" value="A-D-PHexomutase_a/b/a-I"/>
</dbReference>
<dbReference type="InterPro" id="IPR016055">
    <property type="entry name" value="A-D-PHexomutase_a/b/a-I/II/III"/>
</dbReference>
<dbReference type="InterPro" id="IPR005845">
    <property type="entry name" value="A-D-PHexomutase_a/b/a-II"/>
</dbReference>
<dbReference type="InterPro" id="IPR005846">
    <property type="entry name" value="A-D-PHexomutase_a/b/a-III"/>
</dbReference>
<dbReference type="InterPro" id="IPR005843">
    <property type="entry name" value="A-D-PHexomutase_C"/>
</dbReference>
<dbReference type="InterPro" id="IPR036900">
    <property type="entry name" value="A-D-PHexomutase_C_sf"/>
</dbReference>
<dbReference type="InterPro" id="IPR005841">
    <property type="entry name" value="Alpha-D-phosphohexomutase_SF"/>
</dbReference>
<dbReference type="InterPro" id="IPR006352">
    <property type="entry name" value="GlmM_bact"/>
</dbReference>
<dbReference type="InterPro" id="IPR050060">
    <property type="entry name" value="Phosphoglucosamine_mutase"/>
</dbReference>
<dbReference type="NCBIfam" id="TIGR01455">
    <property type="entry name" value="glmM"/>
    <property type="match status" value="1"/>
</dbReference>
<dbReference type="NCBIfam" id="NF008139">
    <property type="entry name" value="PRK10887.1"/>
    <property type="match status" value="1"/>
</dbReference>
<dbReference type="PANTHER" id="PTHR42946:SF1">
    <property type="entry name" value="PHOSPHOGLUCOMUTASE (ALPHA-D-GLUCOSE-1,6-BISPHOSPHATE-DEPENDENT)"/>
    <property type="match status" value="1"/>
</dbReference>
<dbReference type="PANTHER" id="PTHR42946">
    <property type="entry name" value="PHOSPHOHEXOSE MUTASE"/>
    <property type="match status" value="1"/>
</dbReference>
<dbReference type="Pfam" id="PF02878">
    <property type="entry name" value="PGM_PMM_I"/>
    <property type="match status" value="1"/>
</dbReference>
<dbReference type="Pfam" id="PF02879">
    <property type="entry name" value="PGM_PMM_II"/>
    <property type="match status" value="1"/>
</dbReference>
<dbReference type="Pfam" id="PF02880">
    <property type="entry name" value="PGM_PMM_III"/>
    <property type="match status" value="1"/>
</dbReference>
<dbReference type="Pfam" id="PF00408">
    <property type="entry name" value="PGM_PMM_IV"/>
    <property type="match status" value="1"/>
</dbReference>
<dbReference type="PRINTS" id="PR00509">
    <property type="entry name" value="PGMPMM"/>
</dbReference>
<dbReference type="SUPFAM" id="SSF55957">
    <property type="entry name" value="Phosphoglucomutase, C-terminal domain"/>
    <property type="match status" value="1"/>
</dbReference>
<dbReference type="SUPFAM" id="SSF53738">
    <property type="entry name" value="Phosphoglucomutase, first 3 domains"/>
    <property type="match status" value="3"/>
</dbReference>
<feature type="chain" id="PRO_0000147890" description="Phosphoglucosamine mutase">
    <location>
        <begin position="1"/>
        <end position="443"/>
    </location>
</feature>
<feature type="active site" description="Phosphoserine intermediate" evidence="1">
    <location>
        <position position="101"/>
    </location>
</feature>
<feature type="binding site" description="via phosphate group" evidence="1">
    <location>
        <position position="101"/>
    </location>
    <ligand>
        <name>Mg(2+)</name>
        <dbReference type="ChEBI" id="CHEBI:18420"/>
    </ligand>
</feature>
<feature type="binding site" evidence="1">
    <location>
        <position position="239"/>
    </location>
    <ligand>
        <name>Mg(2+)</name>
        <dbReference type="ChEBI" id="CHEBI:18420"/>
    </ligand>
</feature>
<feature type="binding site" evidence="1">
    <location>
        <position position="241"/>
    </location>
    <ligand>
        <name>Mg(2+)</name>
        <dbReference type="ChEBI" id="CHEBI:18420"/>
    </ligand>
</feature>
<feature type="binding site" evidence="1">
    <location>
        <position position="243"/>
    </location>
    <ligand>
        <name>Mg(2+)</name>
        <dbReference type="ChEBI" id="CHEBI:18420"/>
    </ligand>
</feature>
<feature type="modified residue" description="Phosphoserine" evidence="1">
    <location>
        <position position="101"/>
    </location>
</feature>
<feature type="strand" evidence="2">
    <location>
        <begin position="7"/>
        <end position="20"/>
    </location>
</feature>
<feature type="helix" evidence="2">
    <location>
        <begin position="21"/>
        <end position="37"/>
    </location>
</feature>
<feature type="strand" evidence="2">
    <location>
        <begin position="42"/>
        <end position="48"/>
    </location>
</feature>
<feature type="helix" evidence="2">
    <location>
        <begin position="54"/>
        <end position="68"/>
    </location>
</feature>
<feature type="strand" evidence="2">
    <location>
        <begin position="71"/>
        <end position="77"/>
    </location>
</feature>
<feature type="helix" evidence="2">
    <location>
        <begin position="80"/>
        <end position="89"/>
    </location>
</feature>
<feature type="strand" evidence="2">
    <location>
        <begin position="93"/>
        <end position="98"/>
    </location>
</feature>
<feature type="strand" evidence="2">
    <location>
        <begin position="107"/>
        <end position="114"/>
    </location>
</feature>
<feature type="helix" evidence="2">
    <location>
        <begin position="122"/>
        <end position="132"/>
    </location>
</feature>
<feature type="strand" evidence="2">
    <location>
        <begin position="147"/>
        <end position="149"/>
    </location>
</feature>
<feature type="turn" evidence="2">
    <location>
        <begin position="151"/>
        <end position="154"/>
    </location>
</feature>
<feature type="helix" evidence="2">
    <location>
        <begin position="155"/>
        <end position="165"/>
    </location>
</feature>
<feature type="turn" evidence="2">
    <location>
        <begin position="166"/>
        <end position="168"/>
    </location>
</feature>
<feature type="strand" evidence="2">
    <location>
        <begin position="173"/>
        <end position="178"/>
    </location>
</feature>
<feature type="turn" evidence="2">
    <location>
        <begin position="183"/>
        <end position="186"/>
    </location>
</feature>
<feature type="helix" evidence="2">
    <location>
        <begin position="187"/>
        <end position="194"/>
    </location>
</feature>
<feature type="strand" evidence="2">
    <location>
        <begin position="198"/>
        <end position="203"/>
    </location>
</feature>
<feature type="turn" evidence="2">
    <location>
        <begin position="211"/>
        <end position="214"/>
    </location>
</feature>
<feature type="helix" evidence="2">
    <location>
        <begin position="220"/>
        <end position="230"/>
    </location>
</feature>
<feature type="strand" evidence="2">
    <location>
        <begin position="233"/>
        <end position="238"/>
    </location>
</feature>
<feature type="strand" evidence="2">
    <location>
        <begin position="244"/>
        <end position="248"/>
    </location>
</feature>
<feature type="helix" evidence="2">
    <location>
        <begin position="257"/>
        <end position="266"/>
    </location>
</feature>
<feature type="turn" evidence="2">
    <location>
        <begin position="267"/>
        <end position="272"/>
    </location>
</feature>
<feature type="strand" evidence="2">
    <location>
        <begin position="277"/>
        <end position="280"/>
    </location>
</feature>
<feature type="helix" evidence="2">
    <location>
        <begin position="285"/>
        <end position="293"/>
    </location>
</feature>
<feature type="strand" evidence="2">
    <location>
        <begin position="298"/>
        <end position="304"/>
    </location>
</feature>
<feature type="helix" evidence="2">
    <location>
        <begin position="307"/>
        <end position="315"/>
    </location>
</feature>
<feature type="strand" evidence="2">
    <location>
        <begin position="319"/>
        <end position="321"/>
    </location>
</feature>
<feature type="strand" evidence="2">
    <location>
        <begin position="325"/>
        <end position="329"/>
    </location>
</feature>
<feature type="turn" evidence="2">
    <location>
        <begin position="330"/>
        <end position="332"/>
    </location>
</feature>
<feature type="helix" evidence="2">
    <location>
        <begin position="338"/>
        <end position="348"/>
    </location>
</feature>
<feature type="turn" evidence="2">
    <location>
        <begin position="349"/>
        <end position="351"/>
    </location>
</feature>
<feature type="helix" evidence="2">
    <location>
        <begin position="356"/>
        <end position="358"/>
    </location>
</feature>
<feature type="strand" evidence="2">
    <location>
        <begin position="367"/>
        <end position="374"/>
    </location>
</feature>
<feature type="helix" evidence="2">
    <location>
        <begin position="381"/>
        <end position="385"/>
    </location>
</feature>
<feature type="helix" evidence="2">
    <location>
        <begin position="388"/>
        <end position="398"/>
    </location>
</feature>
<feature type="helix" evidence="2">
    <location>
        <begin position="399"/>
        <end position="401"/>
    </location>
</feature>
<feature type="strand" evidence="2">
    <location>
        <begin position="402"/>
        <end position="409"/>
    </location>
</feature>
<feature type="strand" evidence="2">
    <location>
        <begin position="412"/>
        <end position="423"/>
    </location>
</feature>
<feature type="helix" evidence="2">
    <location>
        <begin position="424"/>
        <end position="441"/>
    </location>
</feature>
<organism>
    <name type="scientific">Francisella tularensis subsp. tularensis (strain SCHU S4 / Schu 4)</name>
    <dbReference type="NCBI Taxonomy" id="177416"/>
    <lineage>
        <taxon>Bacteria</taxon>
        <taxon>Pseudomonadati</taxon>
        <taxon>Pseudomonadota</taxon>
        <taxon>Gammaproteobacteria</taxon>
        <taxon>Thiotrichales</taxon>
        <taxon>Francisellaceae</taxon>
        <taxon>Francisella</taxon>
    </lineage>
</organism>
<evidence type="ECO:0000255" key="1">
    <source>
        <dbReference type="HAMAP-Rule" id="MF_01554"/>
    </source>
</evidence>
<evidence type="ECO:0007829" key="2">
    <source>
        <dbReference type="PDB" id="3I3W"/>
    </source>
</evidence>
<gene>
    <name evidence="1" type="primary">glmM</name>
    <name type="ordered locus">FTT_0079</name>
</gene>
<reference key="1">
    <citation type="journal article" date="2005" name="Nat. Genet.">
        <title>The complete genome sequence of Francisella tularensis, the causative agent of tularemia.</title>
        <authorList>
            <person name="Larsson P."/>
            <person name="Oyston P.C.F."/>
            <person name="Chain P."/>
            <person name="Chu M.C."/>
            <person name="Duffield M."/>
            <person name="Fuxelius H.-H."/>
            <person name="Garcia E."/>
            <person name="Haelltorp G."/>
            <person name="Johansson D."/>
            <person name="Isherwood K.E."/>
            <person name="Karp P.D."/>
            <person name="Larsson E."/>
            <person name="Liu Y."/>
            <person name="Michell S."/>
            <person name="Prior J."/>
            <person name="Prior R."/>
            <person name="Malfatti S."/>
            <person name="Sjoestedt A."/>
            <person name="Svensson K."/>
            <person name="Thompson N."/>
            <person name="Vergez L."/>
            <person name="Wagg J.K."/>
            <person name="Wren B.W."/>
            <person name="Lindler L.E."/>
            <person name="Andersson S.G.E."/>
            <person name="Forsman M."/>
            <person name="Titball R.W."/>
        </authorList>
    </citation>
    <scope>NUCLEOTIDE SEQUENCE [LARGE SCALE GENOMIC DNA]</scope>
    <source>
        <strain>SCHU S4 / Schu 4</strain>
    </source>
</reference>
<keyword id="KW-0002">3D-structure</keyword>
<keyword id="KW-0413">Isomerase</keyword>
<keyword id="KW-0460">Magnesium</keyword>
<keyword id="KW-0479">Metal-binding</keyword>
<keyword id="KW-0597">Phosphoprotein</keyword>
<keyword id="KW-1185">Reference proteome</keyword>
<accession>Q5NII8</accession>